<sequence length="34" mass="3772">MNDQMFVETLIITSSFFAIAVVLVLSVLLIERTG</sequence>
<keyword id="KW-0472">Membrane</keyword>
<keyword id="KW-0812">Transmembrane</keyword>
<keyword id="KW-1133">Transmembrane helix</keyword>
<proteinExistence type="predicted"/>
<reference key="1">
    <citation type="journal article" date="2005" name="Nucleic Acids Res.">
        <title>Genome dynamics and diversity of Shigella species, the etiologic agents of bacillary dysentery.</title>
        <authorList>
            <person name="Yang F."/>
            <person name="Yang J."/>
            <person name="Zhang X."/>
            <person name="Chen L."/>
            <person name="Jiang Y."/>
            <person name="Yan Y."/>
            <person name="Tang X."/>
            <person name="Wang J."/>
            <person name="Xiong Z."/>
            <person name="Dong J."/>
            <person name="Xue Y."/>
            <person name="Zhu Y."/>
            <person name="Xu X."/>
            <person name="Sun L."/>
            <person name="Chen S."/>
            <person name="Nie H."/>
            <person name="Peng J."/>
            <person name="Xu J."/>
            <person name="Wang Y."/>
            <person name="Yuan Z."/>
            <person name="Wen Y."/>
            <person name="Yao Z."/>
            <person name="Shen Y."/>
            <person name="Qiang B."/>
            <person name="Hou Y."/>
            <person name="Yu J."/>
            <person name="Jin Q."/>
        </authorList>
    </citation>
    <scope>NUCLEOTIDE SEQUENCE [LARGE SCALE GENOMIC DNA]</scope>
    <source>
        <strain>Sb227</strain>
    </source>
</reference>
<gene>
    <name type="primary">yoaI</name>
    <name type="ordered locus">SBO_1305</name>
</gene>
<evidence type="ECO:0000255" key="1"/>
<evidence type="ECO:0000305" key="2"/>
<organism>
    <name type="scientific">Shigella boydii serotype 4 (strain Sb227)</name>
    <dbReference type="NCBI Taxonomy" id="300268"/>
    <lineage>
        <taxon>Bacteria</taxon>
        <taxon>Pseudomonadati</taxon>
        <taxon>Pseudomonadota</taxon>
        <taxon>Gammaproteobacteria</taxon>
        <taxon>Enterobacterales</taxon>
        <taxon>Enterobacteriaceae</taxon>
        <taxon>Shigella</taxon>
    </lineage>
</organism>
<protein>
    <recommendedName>
        <fullName>Uncharacterized protein YoaI</fullName>
    </recommendedName>
</protein>
<feature type="chain" id="PRO_0000248930" description="Uncharacterized protein YoaI">
    <location>
        <begin position="1"/>
        <end position="34"/>
    </location>
</feature>
<feature type="transmembrane region" description="Helical" evidence="1">
    <location>
        <begin position="10"/>
        <end position="30"/>
    </location>
</feature>
<name>YOAI_SHIBS</name>
<dbReference type="EMBL" id="CP000036">
    <property type="protein sequence ID" value="ABB65933.1"/>
    <property type="status" value="ALT_INIT"/>
    <property type="molecule type" value="Genomic_DNA"/>
</dbReference>
<dbReference type="RefSeq" id="WP_000999630.1">
    <property type="nucleotide sequence ID" value="NC_007613.1"/>
</dbReference>
<dbReference type="SMR" id="Q321S5"/>
<dbReference type="GeneID" id="93776034"/>
<dbReference type="KEGG" id="sbo:SBO_1305"/>
<dbReference type="HOGENOM" id="CLU_216793_1_0_6"/>
<dbReference type="Proteomes" id="UP000007067">
    <property type="component" value="Chromosome"/>
</dbReference>
<dbReference type="GO" id="GO:0016020">
    <property type="term" value="C:membrane"/>
    <property type="evidence" value="ECO:0007669"/>
    <property type="project" value="UniProtKB-SubCell"/>
</dbReference>
<dbReference type="InterPro" id="IPR048191">
    <property type="entry name" value="YoaI-like"/>
</dbReference>
<dbReference type="NCBIfam" id="NF041475">
    <property type="entry name" value="membrane_YoaI"/>
    <property type="match status" value="1"/>
</dbReference>
<accession>Q321S5</accession>
<comment type="subcellular location">
    <subcellularLocation>
        <location evidence="2">Membrane</location>
        <topology evidence="2">Single-pass membrane protein</topology>
    </subcellularLocation>
</comment>
<comment type="sequence caution" evidence="2">
    <conflict type="erroneous initiation">
        <sequence resource="EMBL-CDS" id="ABB65933"/>
    </conflict>
</comment>